<protein>
    <recommendedName>
        <fullName evidence="1">Phosphoglucosamine mutase</fullName>
        <ecNumber evidence="1">5.4.2.10</ecNumber>
    </recommendedName>
</protein>
<reference key="1">
    <citation type="journal article" date="2009" name="Proc. Natl. Acad. Sci. U.S.A.">
        <title>The genomic basis of trophic strategy in marine bacteria.</title>
        <authorList>
            <person name="Lauro F.M."/>
            <person name="McDougald D."/>
            <person name="Thomas T."/>
            <person name="Williams T.J."/>
            <person name="Egan S."/>
            <person name="Rice S."/>
            <person name="DeMaere M.Z."/>
            <person name="Ting L."/>
            <person name="Ertan H."/>
            <person name="Johnson J."/>
            <person name="Ferriera S."/>
            <person name="Lapidus A."/>
            <person name="Anderson I."/>
            <person name="Kyrpides N."/>
            <person name="Munk A.C."/>
            <person name="Detter C."/>
            <person name="Han C.S."/>
            <person name="Brown M.V."/>
            <person name="Robb F.T."/>
            <person name="Kjelleberg S."/>
            <person name="Cavicchioli R."/>
        </authorList>
    </citation>
    <scope>NUCLEOTIDE SEQUENCE [LARGE SCALE GENOMIC DNA]</scope>
    <source>
        <strain>DSM 13593 / LMG 18877 / RB2256</strain>
    </source>
</reference>
<organism>
    <name type="scientific">Sphingopyxis alaskensis (strain DSM 13593 / LMG 18877 / RB2256)</name>
    <name type="common">Sphingomonas alaskensis</name>
    <dbReference type="NCBI Taxonomy" id="317655"/>
    <lineage>
        <taxon>Bacteria</taxon>
        <taxon>Pseudomonadati</taxon>
        <taxon>Pseudomonadota</taxon>
        <taxon>Alphaproteobacteria</taxon>
        <taxon>Sphingomonadales</taxon>
        <taxon>Sphingomonadaceae</taxon>
        <taxon>Sphingopyxis</taxon>
    </lineage>
</organism>
<comment type="function">
    <text evidence="1">Catalyzes the conversion of glucosamine-6-phosphate to glucosamine-1-phosphate.</text>
</comment>
<comment type="catalytic activity">
    <reaction evidence="1">
        <text>alpha-D-glucosamine 1-phosphate = D-glucosamine 6-phosphate</text>
        <dbReference type="Rhea" id="RHEA:23424"/>
        <dbReference type="ChEBI" id="CHEBI:58516"/>
        <dbReference type="ChEBI" id="CHEBI:58725"/>
        <dbReference type="EC" id="5.4.2.10"/>
    </reaction>
</comment>
<comment type="cofactor">
    <cofactor evidence="1">
        <name>Mg(2+)</name>
        <dbReference type="ChEBI" id="CHEBI:18420"/>
    </cofactor>
    <text evidence="1">Binds 1 Mg(2+) ion per subunit.</text>
</comment>
<comment type="PTM">
    <text evidence="1">Activated by phosphorylation.</text>
</comment>
<comment type="similarity">
    <text evidence="1">Belongs to the phosphohexose mutase family.</text>
</comment>
<name>GLMM_SPHAL</name>
<dbReference type="EC" id="5.4.2.10" evidence="1"/>
<dbReference type="EMBL" id="CP000356">
    <property type="protein sequence ID" value="ABF52678.1"/>
    <property type="molecule type" value="Genomic_DNA"/>
</dbReference>
<dbReference type="RefSeq" id="WP_011541266.1">
    <property type="nucleotide sequence ID" value="NC_008048.1"/>
</dbReference>
<dbReference type="SMR" id="Q1GUJ4"/>
<dbReference type="STRING" id="317655.Sala_0960"/>
<dbReference type="KEGG" id="sal:Sala_0960"/>
<dbReference type="eggNOG" id="COG1109">
    <property type="taxonomic scope" value="Bacteria"/>
</dbReference>
<dbReference type="HOGENOM" id="CLU_016950_7_0_5"/>
<dbReference type="OrthoDB" id="9803322at2"/>
<dbReference type="Proteomes" id="UP000006578">
    <property type="component" value="Chromosome"/>
</dbReference>
<dbReference type="GO" id="GO:0005829">
    <property type="term" value="C:cytosol"/>
    <property type="evidence" value="ECO:0007669"/>
    <property type="project" value="TreeGrafter"/>
</dbReference>
<dbReference type="GO" id="GO:0000287">
    <property type="term" value="F:magnesium ion binding"/>
    <property type="evidence" value="ECO:0007669"/>
    <property type="project" value="UniProtKB-UniRule"/>
</dbReference>
<dbReference type="GO" id="GO:0008966">
    <property type="term" value="F:phosphoglucosamine mutase activity"/>
    <property type="evidence" value="ECO:0007669"/>
    <property type="project" value="UniProtKB-UniRule"/>
</dbReference>
<dbReference type="GO" id="GO:0004615">
    <property type="term" value="F:phosphomannomutase activity"/>
    <property type="evidence" value="ECO:0007669"/>
    <property type="project" value="TreeGrafter"/>
</dbReference>
<dbReference type="GO" id="GO:0005975">
    <property type="term" value="P:carbohydrate metabolic process"/>
    <property type="evidence" value="ECO:0007669"/>
    <property type="project" value="InterPro"/>
</dbReference>
<dbReference type="GO" id="GO:0009252">
    <property type="term" value="P:peptidoglycan biosynthetic process"/>
    <property type="evidence" value="ECO:0007669"/>
    <property type="project" value="TreeGrafter"/>
</dbReference>
<dbReference type="GO" id="GO:0006048">
    <property type="term" value="P:UDP-N-acetylglucosamine biosynthetic process"/>
    <property type="evidence" value="ECO:0007669"/>
    <property type="project" value="TreeGrafter"/>
</dbReference>
<dbReference type="CDD" id="cd05802">
    <property type="entry name" value="GlmM"/>
    <property type="match status" value="1"/>
</dbReference>
<dbReference type="FunFam" id="3.30.310.50:FF:000001">
    <property type="entry name" value="Phosphoglucosamine mutase"/>
    <property type="match status" value="1"/>
</dbReference>
<dbReference type="FunFam" id="3.40.120.10:FF:000001">
    <property type="entry name" value="Phosphoglucosamine mutase"/>
    <property type="match status" value="1"/>
</dbReference>
<dbReference type="FunFam" id="3.40.120.10:FF:000003">
    <property type="entry name" value="Phosphoglucosamine mutase"/>
    <property type="match status" value="1"/>
</dbReference>
<dbReference type="Gene3D" id="3.40.120.10">
    <property type="entry name" value="Alpha-D-Glucose-1,6-Bisphosphate, subunit A, domain 3"/>
    <property type="match status" value="3"/>
</dbReference>
<dbReference type="Gene3D" id="3.30.310.50">
    <property type="entry name" value="Alpha-D-phosphohexomutase, C-terminal domain"/>
    <property type="match status" value="1"/>
</dbReference>
<dbReference type="HAMAP" id="MF_01554_B">
    <property type="entry name" value="GlmM_B"/>
    <property type="match status" value="1"/>
</dbReference>
<dbReference type="InterPro" id="IPR005844">
    <property type="entry name" value="A-D-PHexomutase_a/b/a-I"/>
</dbReference>
<dbReference type="InterPro" id="IPR016055">
    <property type="entry name" value="A-D-PHexomutase_a/b/a-I/II/III"/>
</dbReference>
<dbReference type="InterPro" id="IPR005845">
    <property type="entry name" value="A-D-PHexomutase_a/b/a-II"/>
</dbReference>
<dbReference type="InterPro" id="IPR005846">
    <property type="entry name" value="A-D-PHexomutase_a/b/a-III"/>
</dbReference>
<dbReference type="InterPro" id="IPR005843">
    <property type="entry name" value="A-D-PHexomutase_C"/>
</dbReference>
<dbReference type="InterPro" id="IPR036900">
    <property type="entry name" value="A-D-PHexomutase_C_sf"/>
</dbReference>
<dbReference type="InterPro" id="IPR016066">
    <property type="entry name" value="A-D-PHexomutase_CS"/>
</dbReference>
<dbReference type="InterPro" id="IPR005841">
    <property type="entry name" value="Alpha-D-phosphohexomutase_SF"/>
</dbReference>
<dbReference type="InterPro" id="IPR006352">
    <property type="entry name" value="GlmM_bact"/>
</dbReference>
<dbReference type="InterPro" id="IPR050060">
    <property type="entry name" value="Phosphoglucosamine_mutase"/>
</dbReference>
<dbReference type="NCBIfam" id="TIGR01455">
    <property type="entry name" value="glmM"/>
    <property type="match status" value="1"/>
</dbReference>
<dbReference type="NCBIfam" id="NF008139">
    <property type="entry name" value="PRK10887.1"/>
    <property type="match status" value="1"/>
</dbReference>
<dbReference type="PANTHER" id="PTHR42946:SF1">
    <property type="entry name" value="PHOSPHOGLUCOMUTASE (ALPHA-D-GLUCOSE-1,6-BISPHOSPHATE-DEPENDENT)"/>
    <property type="match status" value="1"/>
</dbReference>
<dbReference type="PANTHER" id="PTHR42946">
    <property type="entry name" value="PHOSPHOHEXOSE MUTASE"/>
    <property type="match status" value="1"/>
</dbReference>
<dbReference type="Pfam" id="PF02878">
    <property type="entry name" value="PGM_PMM_I"/>
    <property type="match status" value="1"/>
</dbReference>
<dbReference type="Pfam" id="PF02879">
    <property type="entry name" value="PGM_PMM_II"/>
    <property type="match status" value="1"/>
</dbReference>
<dbReference type="Pfam" id="PF02880">
    <property type="entry name" value="PGM_PMM_III"/>
    <property type="match status" value="1"/>
</dbReference>
<dbReference type="Pfam" id="PF00408">
    <property type="entry name" value="PGM_PMM_IV"/>
    <property type="match status" value="1"/>
</dbReference>
<dbReference type="PRINTS" id="PR00509">
    <property type="entry name" value="PGMPMM"/>
</dbReference>
<dbReference type="SUPFAM" id="SSF55957">
    <property type="entry name" value="Phosphoglucomutase, C-terminal domain"/>
    <property type="match status" value="1"/>
</dbReference>
<dbReference type="SUPFAM" id="SSF53738">
    <property type="entry name" value="Phosphoglucomutase, first 3 domains"/>
    <property type="match status" value="3"/>
</dbReference>
<dbReference type="PROSITE" id="PS00710">
    <property type="entry name" value="PGM_PMM"/>
    <property type="match status" value="1"/>
</dbReference>
<feature type="chain" id="PRO_0000305680" description="Phosphoglucosamine mutase">
    <location>
        <begin position="1"/>
        <end position="444"/>
    </location>
</feature>
<feature type="active site" description="Phosphoserine intermediate" evidence="1">
    <location>
        <position position="101"/>
    </location>
</feature>
<feature type="binding site" description="via phosphate group" evidence="1">
    <location>
        <position position="101"/>
    </location>
    <ligand>
        <name>Mg(2+)</name>
        <dbReference type="ChEBI" id="CHEBI:18420"/>
    </ligand>
</feature>
<feature type="binding site" evidence="1">
    <location>
        <position position="240"/>
    </location>
    <ligand>
        <name>Mg(2+)</name>
        <dbReference type="ChEBI" id="CHEBI:18420"/>
    </ligand>
</feature>
<feature type="binding site" evidence="1">
    <location>
        <position position="242"/>
    </location>
    <ligand>
        <name>Mg(2+)</name>
        <dbReference type="ChEBI" id="CHEBI:18420"/>
    </ligand>
</feature>
<feature type="binding site" evidence="1">
    <location>
        <position position="244"/>
    </location>
    <ligand>
        <name>Mg(2+)</name>
        <dbReference type="ChEBI" id="CHEBI:18420"/>
    </ligand>
</feature>
<feature type="modified residue" description="Phosphoserine" evidence="1">
    <location>
        <position position="101"/>
    </location>
</feature>
<proteinExistence type="inferred from homology"/>
<keyword id="KW-0413">Isomerase</keyword>
<keyword id="KW-0460">Magnesium</keyword>
<keyword id="KW-0479">Metal-binding</keyword>
<keyword id="KW-0597">Phosphoprotein</keyword>
<keyword id="KW-1185">Reference proteome</keyword>
<evidence type="ECO:0000255" key="1">
    <source>
        <dbReference type="HAMAP-Rule" id="MF_01554"/>
    </source>
</evidence>
<gene>
    <name evidence="1" type="primary">glmM</name>
    <name type="ordered locus">Sala_0960</name>
</gene>
<accession>Q1GUJ4</accession>
<sequence length="444" mass="47186">MRRFFGTDGIRGLTNKVPMTAEVAMRVGMAAGAHFLRGDHKHRVVIGKDTRLSGYMLENALVAGFTSVGMDVVQVGPMPTPAIAMLTRSMRADLGVMISASHNPYQDNGIKLFGPDGYKLSDADEAAIERLLVEEPRLADATHIGRAKRIDDARGRYIHAVKQSLPQMVRLDGLRIVLDCANGAAYNSAPTVFWELGADVVAIGVEPNGTNINDKCGSTAPALLQETVVASGADIGIALDGDADRLIVVDEKGSIIDGDQIMGLIGASWARQGRLKGGGVVATVMSNLGLERFLEGQGLRLERTKVGDRHVLERMKEGGFNVGGEQSGHMILSDHATTGDGTLAALQLLAELVAAERPASELLHQFDPVPQLLKNVRFAGGKPLEDKQVLAAIAEGEAALNGRGRLVIRPSGTEPLIRVMAEGDDAGEVERVVDMICDAVRAAV</sequence>